<proteinExistence type="inferred from homology"/>
<accession>Q3IQ38</accession>
<sequence length="333" mass="34162">MKDYIRRVSDGEDLTQAEAREAASLVFEEATEAQIGALLSALRAKGETEPEIAGFAEGMRAAARRIDPDRSPLVDTCGTGGDGHDTINVSTTSSFVVAGAGVPVAKHGNYSVSSSSGSADVLEEIGVTIDAEPPAVETCIEETGMGFMLAPVFHPAMKAVIGPRKELGMRTIFNVLGPLTNPADADAQVVGVYDEALVPTLADALSRMSVDRALVVHGAGLDEIGVHGESTVAEVDGESVEQYTVTPSDLGVDSHDLSAVAGGSPTENAADMRGILEGDVEGAKRDIILANAGAAIYIAGEADSLAAGVDAARESIDTGAAAAQLASLREFEP</sequence>
<keyword id="KW-0028">Amino-acid biosynthesis</keyword>
<keyword id="KW-0057">Aromatic amino acid biosynthesis</keyword>
<keyword id="KW-0328">Glycosyltransferase</keyword>
<keyword id="KW-0460">Magnesium</keyword>
<keyword id="KW-0479">Metal-binding</keyword>
<keyword id="KW-1185">Reference proteome</keyword>
<keyword id="KW-0808">Transferase</keyword>
<keyword id="KW-0822">Tryptophan biosynthesis</keyword>
<reference key="1">
    <citation type="journal article" date="2005" name="Genome Res.">
        <title>Living with two extremes: conclusions from the genome sequence of Natronomonas pharaonis.</title>
        <authorList>
            <person name="Falb M."/>
            <person name="Pfeiffer F."/>
            <person name="Palm P."/>
            <person name="Rodewald K."/>
            <person name="Hickmann V."/>
            <person name="Tittor J."/>
            <person name="Oesterhelt D."/>
        </authorList>
    </citation>
    <scope>NUCLEOTIDE SEQUENCE [LARGE SCALE GENOMIC DNA]</scope>
    <source>
        <strain>ATCC 35678 / DSM 2160 / CIP 103997 / JCM 8858 / NBRC 14720 / NCIMB 2260 / Gabara</strain>
    </source>
</reference>
<feature type="chain" id="PRO_0000227203" description="Anthranilate phosphoribosyltransferase">
    <location>
        <begin position="1"/>
        <end position="333"/>
    </location>
</feature>
<feature type="binding site" evidence="1">
    <location>
        <position position="78"/>
    </location>
    <ligand>
        <name>5-phospho-alpha-D-ribose 1-diphosphate</name>
        <dbReference type="ChEBI" id="CHEBI:58017"/>
    </ligand>
</feature>
<feature type="binding site" evidence="1">
    <location>
        <position position="78"/>
    </location>
    <ligand>
        <name>anthranilate</name>
        <dbReference type="ChEBI" id="CHEBI:16567"/>
        <label>1</label>
    </ligand>
</feature>
<feature type="binding site" evidence="1">
    <location>
        <begin position="81"/>
        <end position="82"/>
    </location>
    <ligand>
        <name>5-phospho-alpha-D-ribose 1-diphosphate</name>
        <dbReference type="ChEBI" id="CHEBI:58017"/>
    </ligand>
</feature>
<feature type="binding site" evidence="1">
    <location>
        <position position="86"/>
    </location>
    <ligand>
        <name>5-phospho-alpha-D-ribose 1-diphosphate</name>
        <dbReference type="ChEBI" id="CHEBI:58017"/>
    </ligand>
</feature>
<feature type="binding site" evidence="1">
    <location>
        <begin position="88"/>
        <end position="91"/>
    </location>
    <ligand>
        <name>5-phospho-alpha-D-ribose 1-diphosphate</name>
        <dbReference type="ChEBI" id="CHEBI:58017"/>
    </ligand>
</feature>
<feature type="binding site" evidence="1">
    <location>
        <position position="90"/>
    </location>
    <ligand>
        <name>Mg(2+)</name>
        <dbReference type="ChEBI" id="CHEBI:18420"/>
        <label>1</label>
    </ligand>
</feature>
<feature type="binding site" evidence="1">
    <location>
        <begin position="106"/>
        <end position="114"/>
    </location>
    <ligand>
        <name>5-phospho-alpha-D-ribose 1-diphosphate</name>
        <dbReference type="ChEBI" id="CHEBI:58017"/>
    </ligand>
</feature>
<feature type="binding site" evidence="1">
    <location>
        <position position="109"/>
    </location>
    <ligand>
        <name>anthranilate</name>
        <dbReference type="ChEBI" id="CHEBI:16567"/>
        <label>1</label>
    </ligand>
</feature>
<feature type="binding site" evidence="1">
    <location>
        <position position="118"/>
    </location>
    <ligand>
        <name>5-phospho-alpha-D-ribose 1-diphosphate</name>
        <dbReference type="ChEBI" id="CHEBI:58017"/>
    </ligand>
</feature>
<feature type="binding site" evidence="1">
    <location>
        <position position="164"/>
    </location>
    <ligand>
        <name>anthranilate</name>
        <dbReference type="ChEBI" id="CHEBI:16567"/>
        <label>2</label>
    </ligand>
</feature>
<feature type="binding site" evidence="1">
    <location>
        <position position="222"/>
    </location>
    <ligand>
        <name>Mg(2+)</name>
        <dbReference type="ChEBI" id="CHEBI:18420"/>
        <label>2</label>
    </ligand>
</feature>
<feature type="binding site" evidence="1">
    <location>
        <position position="223"/>
    </location>
    <ligand>
        <name>Mg(2+)</name>
        <dbReference type="ChEBI" id="CHEBI:18420"/>
        <label>1</label>
    </ligand>
</feature>
<feature type="binding site" evidence="1">
    <location>
        <position position="223"/>
    </location>
    <ligand>
        <name>Mg(2+)</name>
        <dbReference type="ChEBI" id="CHEBI:18420"/>
        <label>2</label>
    </ligand>
</feature>
<dbReference type="EC" id="2.4.2.18" evidence="1"/>
<dbReference type="EMBL" id="CR936257">
    <property type="protein sequence ID" value="CAI49760.1"/>
    <property type="molecule type" value="Genomic_DNA"/>
</dbReference>
<dbReference type="RefSeq" id="WP_011323380.1">
    <property type="nucleotide sequence ID" value="NC_007426.1"/>
</dbReference>
<dbReference type="SMR" id="Q3IQ38"/>
<dbReference type="STRING" id="348780.NP_3338A"/>
<dbReference type="EnsemblBacteria" id="CAI49760">
    <property type="protein sequence ID" value="CAI49760"/>
    <property type="gene ID" value="NP_3338A"/>
</dbReference>
<dbReference type="GeneID" id="3703411"/>
<dbReference type="KEGG" id="nph:NP_3338A"/>
<dbReference type="eggNOG" id="arCOG02012">
    <property type="taxonomic scope" value="Archaea"/>
</dbReference>
<dbReference type="HOGENOM" id="CLU_034315_2_1_2"/>
<dbReference type="OrthoDB" id="8214at2157"/>
<dbReference type="UniPathway" id="UPA00035">
    <property type="reaction ID" value="UER00041"/>
</dbReference>
<dbReference type="Proteomes" id="UP000002698">
    <property type="component" value="Chromosome"/>
</dbReference>
<dbReference type="GO" id="GO:0005829">
    <property type="term" value="C:cytosol"/>
    <property type="evidence" value="ECO:0007669"/>
    <property type="project" value="TreeGrafter"/>
</dbReference>
<dbReference type="GO" id="GO:0004048">
    <property type="term" value="F:anthranilate phosphoribosyltransferase activity"/>
    <property type="evidence" value="ECO:0007669"/>
    <property type="project" value="UniProtKB-UniRule"/>
</dbReference>
<dbReference type="GO" id="GO:0000287">
    <property type="term" value="F:magnesium ion binding"/>
    <property type="evidence" value="ECO:0007669"/>
    <property type="project" value="UniProtKB-UniRule"/>
</dbReference>
<dbReference type="GO" id="GO:0000162">
    <property type="term" value="P:L-tryptophan biosynthetic process"/>
    <property type="evidence" value="ECO:0007669"/>
    <property type="project" value="UniProtKB-UniRule"/>
</dbReference>
<dbReference type="FunFam" id="3.40.1030.10:FF:000002">
    <property type="entry name" value="Anthranilate phosphoribosyltransferase"/>
    <property type="match status" value="1"/>
</dbReference>
<dbReference type="Gene3D" id="3.40.1030.10">
    <property type="entry name" value="Nucleoside phosphorylase/phosphoribosyltransferase catalytic domain"/>
    <property type="match status" value="1"/>
</dbReference>
<dbReference type="Gene3D" id="1.20.970.10">
    <property type="entry name" value="Transferase, Pyrimidine Nucleoside Phosphorylase, Chain C"/>
    <property type="match status" value="1"/>
</dbReference>
<dbReference type="HAMAP" id="MF_00211">
    <property type="entry name" value="TrpD"/>
    <property type="match status" value="1"/>
</dbReference>
<dbReference type="InterPro" id="IPR005940">
    <property type="entry name" value="Anthranilate_Pribosyl_Tfrase"/>
</dbReference>
<dbReference type="InterPro" id="IPR000312">
    <property type="entry name" value="Glycosyl_Trfase_fam3"/>
</dbReference>
<dbReference type="InterPro" id="IPR017459">
    <property type="entry name" value="Glycosyl_Trfase_fam3_N_dom"/>
</dbReference>
<dbReference type="InterPro" id="IPR036320">
    <property type="entry name" value="Glycosyl_Trfase_fam3_N_dom_sf"/>
</dbReference>
<dbReference type="InterPro" id="IPR035902">
    <property type="entry name" value="Nuc_phospho_transferase"/>
</dbReference>
<dbReference type="NCBIfam" id="TIGR01245">
    <property type="entry name" value="trpD"/>
    <property type="match status" value="1"/>
</dbReference>
<dbReference type="PANTHER" id="PTHR43285">
    <property type="entry name" value="ANTHRANILATE PHOSPHORIBOSYLTRANSFERASE"/>
    <property type="match status" value="1"/>
</dbReference>
<dbReference type="PANTHER" id="PTHR43285:SF2">
    <property type="entry name" value="ANTHRANILATE PHOSPHORIBOSYLTRANSFERASE"/>
    <property type="match status" value="1"/>
</dbReference>
<dbReference type="Pfam" id="PF02885">
    <property type="entry name" value="Glycos_trans_3N"/>
    <property type="match status" value="1"/>
</dbReference>
<dbReference type="Pfam" id="PF00591">
    <property type="entry name" value="Glycos_transf_3"/>
    <property type="match status" value="1"/>
</dbReference>
<dbReference type="SUPFAM" id="SSF52418">
    <property type="entry name" value="Nucleoside phosphorylase/phosphoribosyltransferase catalytic domain"/>
    <property type="match status" value="1"/>
</dbReference>
<dbReference type="SUPFAM" id="SSF47648">
    <property type="entry name" value="Nucleoside phosphorylase/phosphoribosyltransferase N-terminal domain"/>
    <property type="match status" value="1"/>
</dbReference>
<evidence type="ECO:0000255" key="1">
    <source>
        <dbReference type="HAMAP-Rule" id="MF_00211"/>
    </source>
</evidence>
<gene>
    <name evidence="1" type="primary">trpD</name>
    <name type="ordered locus">NP_3338A</name>
</gene>
<protein>
    <recommendedName>
        <fullName evidence="1">Anthranilate phosphoribosyltransferase</fullName>
        <ecNumber evidence="1">2.4.2.18</ecNumber>
    </recommendedName>
</protein>
<name>TRPD_NATPD</name>
<comment type="function">
    <text evidence="1">Catalyzes the transfer of the phosphoribosyl group of 5-phosphorylribose-1-pyrophosphate (PRPP) to anthranilate to yield N-(5'-phosphoribosyl)-anthranilate (PRA).</text>
</comment>
<comment type="catalytic activity">
    <reaction evidence="1">
        <text>N-(5-phospho-beta-D-ribosyl)anthranilate + diphosphate = 5-phospho-alpha-D-ribose 1-diphosphate + anthranilate</text>
        <dbReference type="Rhea" id="RHEA:11768"/>
        <dbReference type="ChEBI" id="CHEBI:16567"/>
        <dbReference type="ChEBI" id="CHEBI:18277"/>
        <dbReference type="ChEBI" id="CHEBI:33019"/>
        <dbReference type="ChEBI" id="CHEBI:58017"/>
        <dbReference type="EC" id="2.4.2.18"/>
    </reaction>
</comment>
<comment type="cofactor">
    <cofactor evidence="1">
        <name>Mg(2+)</name>
        <dbReference type="ChEBI" id="CHEBI:18420"/>
    </cofactor>
    <text evidence="1">Binds 2 magnesium ions per monomer.</text>
</comment>
<comment type="pathway">
    <text evidence="1">Amino-acid biosynthesis; L-tryptophan biosynthesis; L-tryptophan from chorismate: step 2/5.</text>
</comment>
<comment type="subunit">
    <text evidence="1">Homodimer.</text>
</comment>
<comment type="similarity">
    <text evidence="1">Belongs to the anthranilate phosphoribosyltransferase family.</text>
</comment>
<organism>
    <name type="scientific">Natronomonas pharaonis (strain ATCC 35678 / DSM 2160 / CIP 103997 / JCM 8858 / NBRC 14720 / NCIMB 2260 / Gabara)</name>
    <name type="common">Halobacterium pharaonis</name>
    <dbReference type="NCBI Taxonomy" id="348780"/>
    <lineage>
        <taxon>Archaea</taxon>
        <taxon>Methanobacteriati</taxon>
        <taxon>Methanobacteriota</taxon>
        <taxon>Stenosarchaea group</taxon>
        <taxon>Halobacteria</taxon>
        <taxon>Halobacteriales</taxon>
        <taxon>Haloarculaceae</taxon>
        <taxon>Natronomonas</taxon>
    </lineage>
</organism>